<sequence length="358" mass="38085">MSTSTATAQNLSFVLEGIHQVKFEDRPIPELKDPHDVLVNVKFTGICGSDVHYWEHGSIGQFVVKDPMVLGHESSGVISKVGSAVTGLKVGDRVAMEPGIPCRRCEPCKAGKYNLCEKMAFAATPPYDGTLAKFYVLPEDFCYKLPDNISLQEGALMEPLGVAVHIVRQASVTPGQSVIVFGAGPVGLLCCAVAKAFGAAKIIAVDIQKPRLDFAKRYAATSTFEPAKVSAVDNADRLRKENNLGVGADVVIDASGAEPSVHTGIHVLRPGGTYVQGGMGRSEIMFPIMAACTKELTFKGSFRYGSGDYKLAVGLVASGRVNVKDLITGVVEFHDAEQAFKEVKAGKGIKTLIAGIQD</sequence>
<dbReference type="EC" id="1.1.1.9"/>
<dbReference type="EMBL" id="DS027692">
    <property type="protein sequence ID" value="EAW20990.1"/>
    <property type="molecule type" value="Genomic_DNA"/>
</dbReference>
<dbReference type="RefSeq" id="XP_001262887.1">
    <property type="nucleotide sequence ID" value="XM_001262886.1"/>
</dbReference>
<dbReference type="SMR" id="A1D9C9"/>
<dbReference type="STRING" id="331117.A1D9C9"/>
<dbReference type="EnsemblFungi" id="EAW20990">
    <property type="protein sequence ID" value="EAW20990"/>
    <property type="gene ID" value="NFIA_115270"/>
</dbReference>
<dbReference type="GeneID" id="4589523"/>
<dbReference type="KEGG" id="nfi:NFIA_115270"/>
<dbReference type="VEuPathDB" id="FungiDB:NFIA_115270"/>
<dbReference type="eggNOG" id="KOG0024">
    <property type="taxonomic scope" value="Eukaryota"/>
</dbReference>
<dbReference type="HOGENOM" id="CLU_026673_11_5_1"/>
<dbReference type="OMA" id="FETWYAM"/>
<dbReference type="OrthoDB" id="3941538at2759"/>
<dbReference type="UniPathway" id="UPA00146">
    <property type="reaction ID" value="UER00577"/>
</dbReference>
<dbReference type="Proteomes" id="UP000006702">
    <property type="component" value="Unassembled WGS sequence"/>
</dbReference>
<dbReference type="GO" id="GO:0046526">
    <property type="term" value="F:D-xylulose reductase activity"/>
    <property type="evidence" value="ECO:0007669"/>
    <property type="project" value="UniProtKB-EC"/>
</dbReference>
<dbReference type="GO" id="GO:0003939">
    <property type="term" value="F:L-iditol 2-dehydrogenase (NAD+) activity"/>
    <property type="evidence" value="ECO:0007669"/>
    <property type="project" value="TreeGrafter"/>
</dbReference>
<dbReference type="GO" id="GO:0008270">
    <property type="term" value="F:zinc ion binding"/>
    <property type="evidence" value="ECO:0007669"/>
    <property type="project" value="InterPro"/>
</dbReference>
<dbReference type="GO" id="GO:0042732">
    <property type="term" value="P:D-xylose metabolic process"/>
    <property type="evidence" value="ECO:0007669"/>
    <property type="project" value="UniProtKB-KW"/>
</dbReference>
<dbReference type="GO" id="GO:0019569">
    <property type="term" value="P:L-arabinose catabolic process to xylulose 5-phosphate"/>
    <property type="evidence" value="ECO:0007669"/>
    <property type="project" value="UniProtKB-UniPathway"/>
</dbReference>
<dbReference type="GO" id="GO:0006062">
    <property type="term" value="P:sorbitol catabolic process"/>
    <property type="evidence" value="ECO:0007669"/>
    <property type="project" value="TreeGrafter"/>
</dbReference>
<dbReference type="CDD" id="cd05285">
    <property type="entry name" value="sorbitol_DH"/>
    <property type="match status" value="1"/>
</dbReference>
<dbReference type="FunFam" id="3.40.50.720:FF:000068">
    <property type="entry name" value="Sorbitol dehydrogenase"/>
    <property type="match status" value="1"/>
</dbReference>
<dbReference type="Gene3D" id="3.90.180.10">
    <property type="entry name" value="Medium-chain alcohol dehydrogenases, catalytic domain"/>
    <property type="match status" value="1"/>
</dbReference>
<dbReference type="Gene3D" id="3.40.50.720">
    <property type="entry name" value="NAD(P)-binding Rossmann-like Domain"/>
    <property type="match status" value="1"/>
</dbReference>
<dbReference type="InterPro" id="IPR013149">
    <property type="entry name" value="ADH-like_C"/>
</dbReference>
<dbReference type="InterPro" id="IPR013154">
    <property type="entry name" value="ADH-like_N"/>
</dbReference>
<dbReference type="InterPro" id="IPR002328">
    <property type="entry name" value="ADH_Zn_CS"/>
</dbReference>
<dbReference type="InterPro" id="IPR011032">
    <property type="entry name" value="GroES-like_sf"/>
</dbReference>
<dbReference type="InterPro" id="IPR036291">
    <property type="entry name" value="NAD(P)-bd_dom_sf"/>
</dbReference>
<dbReference type="InterPro" id="IPR020843">
    <property type="entry name" value="PKS_ER"/>
</dbReference>
<dbReference type="InterPro" id="IPR045306">
    <property type="entry name" value="SDH-like"/>
</dbReference>
<dbReference type="PANTHER" id="PTHR43161">
    <property type="entry name" value="SORBITOL DEHYDROGENASE"/>
    <property type="match status" value="1"/>
</dbReference>
<dbReference type="PANTHER" id="PTHR43161:SF9">
    <property type="entry name" value="SORBITOL DEHYDROGENASE"/>
    <property type="match status" value="1"/>
</dbReference>
<dbReference type="Pfam" id="PF08240">
    <property type="entry name" value="ADH_N"/>
    <property type="match status" value="1"/>
</dbReference>
<dbReference type="Pfam" id="PF00107">
    <property type="entry name" value="ADH_zinc_N"/>
    <property type="match status" value="1"/>
</dbReference>
<dbReference type="SMART" id="SM00829">
    <property type="entry name" value="PKS_ER"/>
    <property type="match status" value="1"/>
</dbReference>
<dbReference type="SUPFAM" id="SSF50129">
    <property type="entry name" value="GroES-like"/>
    <property type="match status" value="1"/>
</dbReference>
<dbReference type="SUPFAM" id="SSF51735">
    <property type="entry name" value="NAD(P)-binding Rossmann-fold domains"/>
    <property type="match status" value="1"/>
</dbReference>
<dbReference type="PROSITE" id="PS00059">
    <property type="entry name" value="ADH_ZINC"/>
    <property type="match status" value="1"/>
</dbReference>
<reference key="1">
    <citation type="journal article" date="2008" name="PLoS Genet.">
        <title>Genomic islands in the pathogenic filamentous fungus Aspergillus fumigatus.</title>
        <authorList>
            <person name="Fedorova N.D."/>
            <person name="Khaldi N."/>
            <person name="Joardar V.S."/>
            <person name="Maiti R."/>
            <person name="Amedeo P."/>
            <person name="Anderson M.J."/>
            <person name="Crabtree J."/>
            <person name="Silva J.C."/>
            <person name="Badger J.H."/>
            <person name="Albarraq A."/>
            <person name="Angiuoli S."/>
            <person name="Bussey H."/>
            <person name="Bowyer P."/>
            <person name="Cotty P.J."/>
            <person name="Dyer P.S."/>
            <person name="Egan A."/>
            <person name="Galens K."/>
            <person name="Fraser-Liggett C.M."/>
            <person name="Haas B.J."/>
            <person name="Inman J.M."/>
            <person name="Kent R."/>
            <person name="Lemieux S."/>
            <person name="Malavazi I."/>
            <person name="Orvis J."/>
            <person name="Roemer T."/>
            <person name="Ronning C.M."/>
            <person name="Sundaram J.P."/>
            <person name="Sutton G."/>
            <person name="Turner G."/>
            <person name="Venter J.C."/>
            <person name="White O.R."/>
            <person name="Whitty B.R."/>
            <person name="Youngman P."/>
            <person name="Wolfe K.H."/>
            <person name="Goldman G.H."/>
            <person name="Wortman J.R."/>
            <person name="Jiang B."/>
            <person name="Denning D.W."/>
            <person name="Nierman W.C."/>
        </authorList>
    </citation>
    <scope>NUCLEOTIDE SEQUENCE [LARGE SCALE GENOMIC DNA]</scope>
    <source>
        <strain>ATCC 1020 / DSM 3700 / CBS 544.65 / FGSC A1164 / JCM 1740 / NRRL 181 / WB 181</strain>
    </source>
</reference>
<comment type="function">
    <text evidence="1">Xylitol dehydrogenase which catalyzes the conversion of xylitol to D-xylulose. Xylose is a major component of hemicelluloses such as xylan. Most fungi utilize D-xylose via three enzymatic reactions, xylose reductase (XR), xylitol dehydrogenase (XDH), and xylulokinase, to form xylulose 5-phosphate, which enters pentose phosphate pathway (By similarity).</text>
</comment>
<comment type="catalytic activity">
    <reaction>
        <text>xylitol + NAD(+) = D-xylulose + NADH + H(+)</text>
        <dbReference type="Rhea" id="RHEA:20433"/>
        <dbReference type="ChEBI" id="CHEBI:15378"/>
        <dbReference type="ChEBI" id="CHEBI:17140"/>
        <dbReference type="ChEBI" id="CHEBI:17151"/>
        <dbReference type="ChEBI" id="CHEBI:57540"/>
        <dbReference type="ChEBI" id="CHEBI:57945"/>
        <dbReference type="EC" id="1.1.1.9"/>
    </reaction>
</comment>
<comment type="cofactor">
    <cofactor evidence="1">
        <name>Zn(2+)</name>
        <dbReference type="ChEBI" id="CHEBI:29105"/>
    </cofactor>
    <text evidence="1">Binds 1 zinc ion per subunit.</text>
</comment>
<comment type="pathway">
    <text>Carbohydrate degradation; L-arabinose degradation via L-arabinitol; D-xylulose 5-phosphate from L-arabinose (fungal route): step 4/5.</text>
</comment>
<comment type="similarity">
    <text evidence="3">Belongs to the zinc-containing alcohol dehydrogenase family.</text>
</comment>
<keyword id="KW-0119">Carbohydrate metabolism</keyword>
<keyword id="KW-0479">Metal-binding</keyword>
<keyword id="KW-0520">NAD</keyword>
<keyword id="KW-0560">Oxidoreductase</keyword>
<keyword id="KW-1185">Reference proteome</keyword>
<keyword id="KW-0859">Xylose metabolism</keyword>
<keyword id="KW-0862">Zinc</keyword>
<protein>
    <recommendedName>
        <fullName>Probable D-xylulose reductase A</fullName>
        <ecNumber>1.1.1.9</ecNumber>
    </recommendedName>
    <alternativeName>
        <fullName>Xylitol dehydrogenase A</fullName>
    </alternativeName>
</protein>
<organism>
    <name type="scientific">Neosartorya fischeri (strain ATCC 1020 / DSM 3700 / CBS 544.65 / FGSC A1164 / JCM 1740 / NRRL 181 / WB 181)</name>
    <name type="common">Aspergillus fischerianus</name>
    <dbReference type="NCBI Taxonomy" id="331117"/>
    <lineage>
        <taxon>Eukaryota</taxon>
        <taxon>Fungi</taxon>
        <taxon>Dikarya</taxon>
        <taxon>Ascomycota</taxon>
        <taxon>Pezizomycotina</taxon>
        <taxon>Eurotiomycetes</taxon>
        <taxon>Eurotiomycetidae</taxon>
        <taxon>Eurotiales</taxon>
        <taxon>Aspergillaceae</taxon>
        <taxon>Aspergillus</taxon>
        <taxon>Aspergillus subgen. Fumigati</taxon>
    </lineage>
</organism>
<accession>A1D9C9</accession>
<feature type="chain" id="PRO_0000393515" description="Probable D-xylulose reductase A">
    <location>
        <begin position="1"/>
        <end position="358"/>
    </location>
</feature>
<feature type="binding site" evidence="1">
    <location>
        <position position="47"/>
    </location>
    <ligand>
        <name>Zn(2+)</name>
        <dbReference type="ChEBI" id="CHEBI:29105"/>
        <note>catalytic</note>
    </ligand>
</feature>
<feature type="binding site" evidence="1">
    <location>
        <position position="72"/>
    </location>
    <ligand>
        <name>Zn(2+)</name>
        <dbReference type="ChEBI" id="CHEBI:29105"/>
        <note>catalytic</note>
    </ligand>
</feature>
<feature type="binding site" evidence="1">
    <location>
        <position position="73"/>
    </location>
    <ligand>
        <name>Zn(2+)</name>
        <dbReference type="ChEBI" id="CHEBI:29105"/>
        <note>catalytic</note>
    </ligand>
</feature>
<feature type="binding site" evidence="2">
    <location>
        <begin position="182"/>
        <end position="187"/>
    </location>
    <ligand>
        <name>NAD(+)</name>
        <dbReference type="ChEBI" id="CHEBI:57540"/>
    </ligand>
</feature>
<proteinExistence type="inferred from homology"/>
<evidence type="ECO:0000250" key="1"/>
<evidence type="ECO:0000255" key="2"/>
<evidence type="ECO:0000305" key="3"/>
<name>XYL2_NEOFI</name>
<gene>
    <name type="primary">xdhA</name>
    <name type="ORF">NFIA_115270</name>
</gene>